<name>ENO_PICP2</name>
<feature type="chain" id="PRO_1000115924" description="Enolase">
    <location>
        <begin position="1"/>
        <end position="430"/>
    </location>
</feature>
<feature type="active site" description="Proton donor" evidence="1">
    <location>
        <position position="210"/>
    </location>
</feature>
<feature type="active site" description="Proton acceptor" evidence="1">
    <location>
        <position position="340"/>
    </location>
</feature>
<feature type="binding site" evidence="1">
    <location>
        <position position="168"/>
    </location>
    <ligand>
        <name>(2R)-2-phosphoglycerate</name>
        <dbReference type="ChEBI" id="CHEBI:58289"/>
    </ligand>
</feature>
<feature type="binding site" evidence="1">
    <location>
        <position position="247"/>
    </location>
    <ligand>
        <name>Mg(2+)</name>
        <dbReference type="ChEBI" id="CHEBI:18420"/>
    </ligand>
</feature>
<feature type="binding site" evidence="1">
    <location>
        <position position="288"/>
    </location>
    <ligand>
        <name>Mg(2+)</name>
        <dbReference type="ChEBI" id="CHEBI:18420"/>
    </ligand>
</feature>
<feature type="binding site" evidence="1">
    <location>
        <position position="315"/>
    </location>
    <ligand>
        <name>Mg(2+)</name>
        <dbReference type="ChEBI" id="CHEBI:18420"/>
    </ligand>
</feature>
<feature type="binding site" evidence="1">
    <location>
        <position position="340"/>
    </location>
    <ligand>
        <name>(2R)-2-phosphoglycerate</name>
        <dbReference type="ChEBI" id="CHEBI:58289"/>
    </ligand>
</feature>
<feature type="binding site" evidence="1">
    <location>
        <position position="369"/>
    </location>
    <ligand>
        <name>(2R)-2-phosphoglycerate</name>
        <dbReference type="ChEBI" id="CHEBI:58289"/>
    </ligand>
</feature>
<feature type="binding site" evidence="1">
    <location>
        <position position="370"/>
    </location>
    <ligand>
        <name>(2R)-2-phosphoglycerate</name>
        <dbReference type="ChEBI" id="CHEBI:58289"/>
    </ligand>
</feature>
<feature type="binding site" evidence="1">
    <location>
        <position position="391"/>
    </location>
    <ligand>
        <name>(2R)-2-phosphoglycerate</name>
        <dbReference type="ChEBI" id="CHEBI:58289"/>
    </ligand>
</feature>
<sequence length="430" mass="45815">MLDKSEAIIEAIDAREILDSRGRPTVEAEVRLESGAVGLAQVPSGASTGSFEAHELRDGDKARYGGNGVLKAVRNAKEKIAPELIGKDALDQTTVDYAMIARDGSDNKSNLGANAILAVSLAAAKAAAAELALPLYRYLGGPLANVLPVPLMNVINGGAHAANNVDFQEFMIVPVGASSFKEALRWGAEVFTALSKVLDSKGLLTGVGDEGGFAPNLGSNEEALEILVDSIKAAGYEPGTQVALALDIAASEFYADGQYTYDGTAHSPAEFIDYLTAMVEKYPIVSIEDGLHEDDWDSWTILTARIGHRVQLVGDDLFVTNKVRLQQGIEKKAGNAVLIKLNQIGTLTETLETIDLATRNGYQSVISHRSGETEDTTIADLAVATRAGQIKTGSLCRSERVAKYNRLLRIEDELGDRAVYAPKVGLGPQF</sequence>
<proteinExistence type="inferred from homology"/>
<reference key="1">
    <citation type="submission" date="2008-02" db="EMBL/GenBank/DDBJ databases">
        <title>Complete sequence of Synechococcus sp. PCC 7002.</title>
        <authorList>
            <person name="Li T."/>
            <person name="Zhao J."/>
            <person name="Zhao C."/>
            <person name="Liu Z."/>
            <person name="Zhao F."/>
            <person name="Marquardt J."/>
            <person name="Nomura C.T."/>
            <person name="Persson S."/>
            <person name="Detter J.C."/>
            <person name="Richardson P.M."/>
            <person name="Lanz C."/>
            <person name="Schuster S.C."/>
            <person name="Wang J."/>
            <person name="Li S."/>
            <person name="Huang X."/>
            <person name="Cai T."/>
            <person name="Yu Z."/>
            <person name="Luo J."/>
            <person name="Zhao J."/>
            <person name="Bryant D.A."/>
        </authorList>
    </citation>
    <scope>NUCLEOTIDE SEQUENCE [LARGE SCALE GENOMIC DNA]</scope>
    <source>
        <strain>ATCC 27264 / PCC 7002 / PR-6</strain>
    </source>
</reference>
<evidence type="ECO:0000255" key="1">
    <source>
        <dbReference type="HAMAP-Rule" id="MF_00318"/>
    </source>
</evidence>
<accession>B1XLD0</accession>
<dbReference type="EC" id="4.2.1.11" evidence="1"/>
<dbReference type="EMBL" id="CP000951">
    <property type="protein sequence ID" value="ACA98090.1"/>
    <property type="molecule type" value="Genomic_DNA"/>
</dbReference>
<dbReference type="RefSeq" id="WP_012305714.1">
    <property type="nucleotide sequence ID" value="NZ_JAHHPU010000005.1"/>
</dbReference>
<dbReference type="SMR" id="B1XLD0"/>
<dbReference type="STRING" id="32049.SYNPCC7002_A0073"/>
<dbReference type="KEGG" id="syp:SYNPCC7002_A0073"/>
<dbReference type="eggNOG" id="COG0148">
    <property type="taxonomic scope" value="Bacteria"/>
</dbReference>
<dbReference type="HOGENOM" id="CLU_031223_2_1_3"/>
<dbReference type="UniPathway" id="UPA00109">
    <property type="reaction ID" value="UER00187"/>
</dbReference>
<dbReference type="Proteomes" id="UP000001688">
    <property type="component" value="Chromosome"/>
</dbReference>
<dbReference type="GO" id="GO:0009986">
    <property type="term" value="C:cell surface"/>
    <property type="evidence" value="ECO:0007669"/>
    <property type="project" value="UniProtKB-SubCell"/>
</dbReference>
<dbReference type="GO" id="GO:0005576">
    <property type="term" value="C:extracellular region"/>
    <property type="evidence" value="ECO:0007669"/>
    <property type="project" value="UniProtKB-SubCell"/>
</dbReference>
<dbReference type="GO" id="GO:0000015">
    <property type="term" value="C:phosphopyruvate hydratase complex"/>
    <property type="evidence" value="ECO:0007669"/>
    <property type="project" value="InterPro"/>
</dbReference>
<dbReference type="GO" id="GO:0000287">
    <property type="term" value="F:magnesium ion binding"/>
    <property type="evidence" value="ECO:0007669"/>
    <property type="project" value="UniProtKB-UniRule"/>
</dbReference>
<dbReference type="GO" id="GO:0004634">
    <property type="term" value="F:phosphopyruvate hydratase activity"/>
    <property type="evidence" value="ECO:0007669"/>
    <property type="project" value="UniProtKB-UniRule"/>
</dbReference>
<dbReference type="GO" id="GO:0006096">
    <property type="term" value="P:glycolytic process"/>
    <property type="evidence" value="ECO:0007669"/>
    <property type="project" value="UniProtKB-UniRule"/>
</dbReference>
<dbReference type="CDD" id="cd03313">
    <property type="entry name" value="enolase"/>
    <property type="match status" value="1"/>
</dbReference>
<dbReference type="FunFam" id="3.20.20.120:FF:000001">
    <property type="entry name" value="Enolase"/>
    <property type="match status" value="1"/>
</dbReference>
<dbReference type="FunFam" id="3.30.390.10:FF:000001">
    <property type="entry name" value="Enolase"/>
    <property type="match status" value="1"/>
</dbReference>
<dbReference type="Gene3D" id="3.20.20.120">
    <property type="entry name" value="Enolase-like C-terminal domain"/>
    <property type="match status" value="1"/>
</dbReference>
<dbReference type="Gene3D" id="3.30.390.10">
    <property type="entry name" value="Enolase-like, N-terminal domain"/>
    <property type="match status" value="1"/>
</dbReference>
<dbReference type="HAMAP" id="MF_00318">
    <property type="entry name" value="Enolase"/>
    <property type="match status" value="1"/>
</dbReference>
<dbReference type="InterPro" id="IPR000941">
    <property type="entry name" value="Enolase"/>
</dbReference>
<dbReference type="InterPro" id="IPR036849">
    <property type="entry name" value="Enolase-like_C_sf"/>
</dbReference>
<dbReference type="InterPro" id="IPR029017">
    <property type="entry name" value="Enolase-like_N"/>
</dbReference>
<dbReference type="InterPro" id="IPR020810">
    <property type="entry name" value="Enolase_C"/>
</dbReference>
<dbReference type="InterPro" id="IPR020809">
    <property type="entry name" value="Enolase_CS"/>
</dbReference>
<dbReference type="InterPro" id="IPR020811">
    <property type="entry name" value="Enolase_N"/>
</dbReference>
<dbReference type="NCBIfam" id="TIGR01060">
    <property type="entry name" value="eno"/>
    <property type="match status" value="1"/>
</dbReference>
<dbReference type="PANTHER" id="PTHR11902">
    <property type="entry name" value="ENOLASE"/>
    <property type="match status" value="1"/>
</dbReference>
<dbReference type="PANTHER" id="PTHR11902:SF1">
    <property type="entry name" value="ENOLASE"/>
    <property type="match status" value="1"/>
</dbReference>
<dbReference type="Pfam" id="PF00113">
    <property type="entry name" value="Enolase_C"/>
    <property type="match status" value="1"/>
</dbReference>
<dbReference type="Pfam" id="PF03952">
    <property type="entry name" value="Enolase_N"/>
    <property type="match status" value="1"/>
</dbReference>
<dbReference type="PIRSF" id="PIRSF001400">
    <property type="entry name" value="Enolase"/>
    <property type="match status" value="1"/>
</dbReference>
<dbReference type="PRINTS" id="PR00148">
    <property type="entry name" value="ENOLASE"/>
</dbReference>
<dbReference type="SFLD" id="SFLDS00001">
    <property type="entry name" value="Enolase"/>
    <property type="match status" value="1"/>
</dbReference>
<dbReference type="SFLD" id="SFLDF00002">
    <property type="entry name" value="enolase"/>
    <property type="match status" value="1"/>
</dbReference>
<dbReference type="SMART" id="SM01192">
    <property type="entry name" value="Enolase_C"/>
    <property type="match status" value="1"/>
</dbReference>
<dbReference type="SMART" id="SM01193">
    <property type="entry name" value="Enolase_N"/>
    <property type="match status" value="1"/>
</dbReference>
<dbReference type="SUPFAM" id="SSF51604">
    <property type="entry name" value="Enolase C-terminal domain-like"/>
    <property type="match status" value="1"/>
</dbReference>
<dbReference type="SUPFAM" id="SSF54826">
    <property type="entry name" value="Enolase N-terminal domain-like"/>
    <property type="match status" value="1"/>
</dbReference>
<dbReference type="PROSITE" id="PS00164">
    <property type="entry name" value="ENOLASE"/>
    <property type="match status" value="1"/>
</dbReference>
<organism>
    <name type="scientific">Picosynechococcus sp. (strain ATCC 27264 / PCC 7002 / PR-6)</name>
    <name type="common">Agmenellum quadruplicatum</name>
    <dbReference type="NCBI Taxonomy" id="32049"/>
    <lineage>
        <taxon>Bacteria</taxon>
        <taxon>Bacillati</taxon>
        <taxon>Cyanobacteriota</taxon>
        <taxon>Cyanophyceae</taxon>
        <taxon>Oscillatoriophycideae</taxon>
        <taxon>Chroococcales</taxon>
        <taxon>Geminocystaceae</taxon>
        <taxon>Picosynechococcus</taxon>
    </lineage>
</organism>
<keyword id="KW-0963">Cytoplasm</keyword>
<keyword id="KW-0324">Glycolysis</keyword>
<keyword id="KW-0456">Lyase</keyword>
<keyword id="KW-0460">Magnesium</keyword>
<keyword id="KW-0479">Metal-binding</keyword>
<keyword id="KW-1185">Reference proteome</keyword>
<keyword id="KW-0964">Secreted</keyword>
<comment type="function">
    <text evidence="1">Catalyzes the reversible conversion of 2-phosphoglycerate (2-PG) into phosphoenolpyruvate (PEP). It is essential for the degradation of carbohydrates via glycolysis.</text>
</comment>
<comment type="catalytic activity">
    <reaction evidence="1">
        <text>(2R)-2-phosphoglycerate = phosphoenolpyruvate + H2O</text>
        <dbReference type="Rhea" id="RHEA:10164"/>
        <dbReference type="ChEBI" id="CHEBI:15377"/>
        <dbReference type="ChEBI" id="CHEBI:58289"/>
        <dbReference type="ChEBI" id="CHEBI:58702"/>
        <dbReference type="EC" id="4.2.1.11"/>
    </reaction>
</comment>
<comment type="cofactor">
    <cofactor evidence="1">
        <name>Mg(2+)</name>
        <dbReference type="ChEBI" id="CHEBI:18420"/>
    </cofactor>
    <text evidence="1">Binds a second Mg(2+) ion via substrate during catalysis.</text>
</comment>
<comment type="pathway">
    <text evidence="1">Carbohydrate degradation; glycolysis; pyruvate from D-glyceraldehyde 3-phosphate: step 4/5.</text>
</comment>
<comment type="subcellular location">
    <subcellularLocation>
        <location evidence="1">Cytoplasm</location>
    </subcellularLocation>
    <subcellularLocation>
        <location evidence="1">Secreted</location>
    </subcellularLocation>
    <subcellularLocation>
        <location evidence="1">Cell surface</location>
    </subcellularLocation>
    <text evidence="1">Fractions of enolase are present in both the cytoplasm and on the cell surface.</text>
</comment>
<comment type="similarity">
    <text evidence="1">Belongs to the enolase family.</text>
</comment>
<protein>
    <recommendedName>
        <fullName evidence="1">Enolase</fullName>
        <ecNumber evidence="1">4.2.1.11</ecNumber>
    </recommendedName>
    <alternativeName>
        <fullName evidence="1">2-phospho-D-glycerate hydro-lyase</fullName>
    </alternativeName>
    <alternativeName>
        <fullName evidence="1">2-phosphoglycerate dehydratase</fullName>
    </alternativeName>
</protein>
<gene>
    <name evidence="1" type="primary">eno</name>
    <name type="ordered locus">SYNPCC7002_A0073</name>
</gene>